<accession>Q8IX30</accession>
<accession>A8K5A3</accession>
<accession>Q5CZB3</accession>
<accession>Q86UZ9</accession>
<accession>Q8NAU9</accession>
<keyword id="KW-0025">Alternative splicing</keyword>
<keyword id="KW-0106">Calcium</keyword>
<keyword id="KW-0225">Disease variant</keyword>
<keyword id="KW-1015">Disulfide bond</keyword>
<keyword id="KW-0242">Dwarfism</keyword>
<keyword id="KW-0245">EGF-like domain</keyword>
<keyword id="KW-0325">Glycoprotein</keyword>
<keyword id="KW-1267">Proteomics identification</keyword>
<keyword id="KW-1185">Reference proteome</keyword>
<keyword id="KW-0677">Repeat</keyword>
<keyword id="KW-0964">Secreted</keyword>
<keyword id="KW-0732">Signal</keyword>
<protein>
    <recommendedName>
        <fullName>Signal peptide, CUB and EGF-like domain-containing protein 3</fullName>
    </recommendedName>
</protein>
<name>SCUB3_HUMAN</name>
<gene>
    <name evidence="20" type="primary">SCUBE3</name>
    <name evidence="16" type="synonym">CEGF3</name>
</gene>
<comment type="function">
    <text evidence="1 8 9">Is a positive regulator of the BMP signaling pathway, required for proper chondrogenesis, osteogenesis and skeletal development. It acts as a coreceptor for BMP ligands, particularly BMP2 and BMP4, facilitating their interactions with BMP type I receptors (PubMed:33308444). It is required for ligand-induced recruitment of BMP receptors to lipid rafts (By similarity). Binds to TGFBR2 and activates TGFB signaling. In lung cancer cells, could serve as an endogenous autocrine and paracrine ligand of TGFBR2, which could regulate TGFBR2 signaling and hence modulate epithelial-mesenchymal transition and cancer progression.</text>
</comment>
<comment type="subunit">
    <text evidence="6 8 9">Forms homooligomers (PubMed:33308444). Forms heterooligomers with SCUBE1 and SCUBE2 (PubMed:33308444). Interacts with TGFBR2 through the CUB domain; this interaction does not affect TGFB1-binding to TGFBR2. Interacts with BMP2, BMP4 and BMP7; the interaction is mediated by the CUB domain (PubMed:33308444). Interacts with BMPR1A, BMPR1B and BMPR2; the interaction with BMPR1A and BMPR1B is BMP2- and BMP4-dependent (PubMed:33308444).</text>
</comment>
<comment type="interaction">
    <interactant intactId="EBI-4479975">
        <id>Q8IX30</id>
    </interactant>
    <interactant intactId="EBI-1033518">
        <id>P08253</id>
        <label>MMP2</label>
    </interactant>
    <organismsDiffer>false</organismsDiffer>
    <experiments>2</experiments>
</comment>
<comment type="interaction">
    <interactant intactId="EBI-4479975">
        <id>Q8IX30</id>
    </interactant>
    <interactant intactId="EBI-1382326">
        <id>P14780</id>
        <label>MMP9</label>
    </interactant>
    <organismsDiffer>false</organismsDiffer>
    <experiments>2</experiments>
</comment>
<comment type="interaction">
    <interactant intactId="EBI-4479975">
        <id>Q8IX30</id>
    </interactant>
    <interactant intactId="EBI-296151">
        <id>P37173</id>
        <label>TGFBR2</label>
    </interactant>
    <organismsDiffer>false</organismsDiffer>
    <experiments>6</experiments>
</comment>
<comment type="subcellular location">
    <subcellularLocation>
        <location evidence="6 9">Secreted</location>
    </subcellularLocation>
    <subcellularLocation>
        <location evidence="6 9">Cell surface</location>
    </subcellularLocation>
</comment>
<comment type="alternative products">
    <event type="alternative splicing"/>
    <isoform>
        <id>Q8IX30-1</id>
        <name evidence="6 7 10">1</name>
        <sequence type="displayed"/>
    </isoform>
    <isoform>
        <id>Q8IX30-2</id>
        <name evidence="5 7">2</name>
        <sequence type="described" ref="VSP_052167"/>
    </isoform>
</comment>
<comment type="tissue specificity">
    <text evidence="6 8">Highly expressed in osteoblasts. In normal lung, mainly expressed in bronchial epithelial cells. Tends to be up-regulated in lung cancer cells.</text>
</comment>
<comment type="PTM">
    <text evidence="6">N-glycosylated.</text>
</comment>
<comment type="PTM">
    <text evidence="8">Proteolytic cleavage produces a CUB-containing C-terminal fragment that retains the ability to bind to TGFBR2. This reaction is catalyzed in vitro by MMP2 and, to a lesser extent, by MMP9.</text>
</comment>
<comment type="disease" evidence="9">
    <disease id="DI-06048">
        <name>Short stature, facial dysmorphism, and skeletal anomalies with or without cardiac anomalies 2</name>
        <acronym>SSFSC2</acronym>
        <description>An autosomal recessive disorder characterized by reduced growth, skeletal abnormalities, a distinctive craniofacial appearance, and dental anomalies. Cardiac anomalies have been reported in some patients.</description>
        <dbReference type="MIM" id="619184"/>
    </disease>
    <text>The disease is caused by variants affecting the gene represented in this entry.</text>
</comment>
<comment type="sequence caution" evidence="14">
    <conflict type="erroneous initiation">
        <sequence resource="EMBL-CDS" id="BAC03798"/>
    </conflict>
    <text>Truncated N-terminus.</text>
</comment>
<sequence length="993" mass="109282">MGSGRVPGLCLLVLLVHARAAQYSKAAQDVDECVEGTDNCHIDAICQNTPRSYKCICKSGYTGDGKHCKDVDECEREDNAGCVHDCVNIPGNYRCTCYDGFHLAHDGHNCLDVDECAEGNGGCQQSCVNMMGSYECHCREGFFLSDNQHTCIQRPEEGMNCMNKNHGCAHICRETPKGGIACECRPGFELTKNQRDCKLTCNYGNGGCQHTCDDTEQGPRCGCHIKFVLHTDGKTCIETCAVNNGGCDSKCHDAATGVHCTCPVGFMLQPDRKTCKDIDECRLNNGGCDHICRNTVGSFECSCKKGYKLLINERNCQDIDECSFDRTCDHICVNTPGSFQCLCHRGYLLYGITHCGDVDECSINRGGCRFGCINTPGSYQCTCPAGQGRLHWNGKDCTEPLKCQGSPGASKAMLSCNRSGKKDTCALTCPSRARFLPESENGFTVSCGTPSPRAAPARAGHNGNSTNSNHCHEAAVLSIKQRASFKIKDAKCRLHLRNKGKTEEAGRITGPGGAPCSECQVTFIHLKCDSSRKGKGRRARTPPGKEVTRLTLELEAEVRAEETTASCGLPCLRQRMERRLKGSLKMLRKSINQDRFLLRLAGLDYELAHKPGLVAGERAEPMESCRPGQHRAGTKCVSCPQGTYYHGQTEQCVPCPAGTFQEREGQLSCDLCPGSDAHGPLGATNVTTCAGQCPPGQHSVDGFKPCQPCPRGTYQPEAGRTLCFPCGGGLTTKHEGAISFQDCDTKVQCSPGHYYNTSIHRCIRCAMGSYQPDFRQNFCSRCPGNTSTDFDGSTSVAQCKNRQCGGELGEFTGYIESPNYPGNYPAGVECIWNINPPPKRKILIVVPEIFLPSEDECGDVLVMRKNSSPSSITTYETCQTYERPIAFTARSRKLWINFKTSEANSARGFQIPYVTYDEDYEQLVEDIVRDGRLYASENHQEILKDKKLIKAFFEVLAHPQNYFKYTEKHKEMLPKSFIKLLRSKVSSFLRPYK</sequence>
<feature type="signal peptide" evidence="2">
    <location>
        <begin position="1"/>
        <end position="20"/>
    </location>
</feature>
<feature type="chain" id="PRO_0000250616" description="Signal peptide, CUB and EGF-like domain-containing protein 3" evidence="2">
    <location>
        <begin position="21"/>
        <end position="993"/>
    </location>
</feature>
<feature type="domain" description="EGF-like 1; calcium-binding" evidence="4">
    <location>
        <begin position="29"/>
        <end position="69"/>
    </location>
</feature>
<feature type="domain" description="EGF-like 2; calcium-binding" evidence="4">
    <location>
        <begin position="70"/>
        <end position="111"/>
    </location>
</feature>
<feature type="domain" description="EGF-like 3; calcium-binding" evidence="4">
    <location>
        <begin position="112"/>
        <end position="148"/>
    </location>
</feature>
<feature type="domain" description="EGF-like 4" evidence="4">
    <location>
        <begin position="157"/>
        <end position="198"/>
    </location>
</feature>
<feature type="domain" description="EGF-like 5" evidence="4">
    <location>
        <begin position="199"/>
        <end position="237"/>
    </location>
</feature>
<feature type="domain" description="EGF-like 6" evidence="4">
    <location>
        <begin position="238"/>
        <end position="276"/>
    </location>
</feature>
<feature type="domain" description="EGF-like 7; calcium-binding" evidence="4">
    <location>
        <begin position="277"/>
        <end position="317"/>
    </location>
</feature>
<feature type="domain" description="EGF-like 8; calcium-binding" evidence="4">
    <location>
        <begin position="318"/>
        <end position="356"/>
    </location>
</feature>
<feature type="domain" description="EGF-like 9; calcium-binding" evidence="4">
    <location>
        <begin position="357"/>
        <end position="398"/>
    </location>
</feature>
<feature type="domain" description="CUB" evidence="3">
    <location>
        <begin position="804"/>
        <end position="916"/>
    </location>
</feature>
<feature type="glycosylation site" description="N-linked (GlcNAc...) asparagine" evidence="2">
    <location>
        <position position="417"/>
    </location>
</feature>
<feature type="glycosylation site" description="N-linked (GlcNAc...) asparagine" evidence="2">
    <location>
        <position position="464"/>
    </location>
</feature>
<feature type="glycosylation site" description="N-linked (GlcNAc...) asparagine" evidence="2">
    <location>
        <position position="685"/>
    </location>
</feature>
<feature type="glycosylation site" description="N-linked (GlcNAc...) asparagine" evidence="2">
    <location>
        <position position="756"/>
    </location>
</feature>
<feature type="glycosylation site" description="N-linked (GlcNAc...) asparagine" evidence="2">
    <location>
        <position position="785"/>
    </location>
</feature>
<feature type="disulfide bond" evidence="2">
    <location>
        <begin position="33"/>
        <end position="46"/>
    </location>
</feature>
<feature type="disulfide bond" evidence="2">
    <location>
        <begin position="40"/>
        <end position="55"/>
    </location>
</feature>
<feature type="disulfide bond" evidence="2">
    <location>
        <begin position="57"/>
        <end position="68"/>
    </location>
</feature>
<feature type="disulfide bond" evidence="2">
    <location>
        <begin position="74"/>
        <end position="86"/>
    </location>
</feature>
<feature type="disulfide bond" evidence="2">
    <location>
        <begin position="82"/>
        <end position="95"/>
    </location>
</feature>
<feature type="disulfide bond" evidence="2">
    <location>
        <begin position="97"/>
        <end position="110"/>
    </location>
</feature>
<feature type="disulfide bond" evidence="2">
    <location>
        <begin position="116"/>
        <end position="127"/>
    </location>
</feature>
<feature type="disulfide bond" evidence="2">
    <location>
        <begin position="123"/>
        <end position="136"/>
    </location>
</feature>
<feature type="disulfide bond" evidence="2">
    <location>
        <begin position="161"/>
        <end position="172"/>
    </location>
</feature>
<feature type="disulfide bond" evidence="2">
    <location>
        <begin position="168"/>
        <end position="182"/>
    </location>
</feature>
<feature type="disulfide bond" evidence="2">
    <location>
        <begin position="184"/>
        <end position="197"/>
    </location>
</feature>
<feature type="disulfide bond" evidence="2">
    <location>
        <begin position="201"/>
        <end position="212"/>
    </location>
</feature>
<feature type="disulfide bond" evidence="2">
    <location>
        <begin position="208"/>
        <end position="221"/>
    </location>
</feature>
<feature type="disulfide bond" evidence="2">
    <location>
        <begin position="223"/>
        <end position="236"/>
    </location>
</feature>
<feature type="disulfide bond" evidence="2">
    <location>
        <begin position="240"/>
        <end position="251"/>
    </location>
</feature>
<feature type="disulfide bond" evidence="2">
    <location>
        <begin position="247"/>
        <end position="260"/>
    </location>
</feature>
<feature type="disulfide bond" evidence="2">
    <location>
        <begin position="262"/>
        <end position="275"/>
    </location>
</feature>
<feature type="disulfide bond" evidence="2">
    <location>
        <begin position="281"/>
        <end position="292"/>
    </location>
</feature>
<feature type="disulfide bond" evidence="2">
    <location>
        <begin position="288"/>
        <end position="301"/>
    </location>
</feature>
<feature type="disulfide bond" evidence="2">
    <location>
        <begin position="303"/>
        <end position="316"/>
    </location>
</feature>
<feature type="disulfide bond" evidence="2">
    <location>
        <begin position="322"/>
        <end position="332"/>
    </location>
</feature>
<feature type="disulfide bond" evidence="2">
    <location>
        <begin position="328"/>
        <end position="341"/>
    </location>
</feature>
<feature type="disulfide bond" evidence="2">
    <location>
        <begin position="343"/>
        <end position="355"/>
    </location>
</feature>
<feature type="disulfide bond" evidence="2">
    <location>
        <begin position="361"/>
        <end position="372"/>
    </location>
</feature>
<feature type="disulfide bond" evidence="2">
    <location>
        <begin position="368"/>
        <end position="381"/>
    </location>
</feature>
<feature type="disulfide bond" evidence="2">
    <location>
        <begin position="383"/>
        <end position="397"/>
    </location>
</feature>
<feature type="disulfide bond" evidence="2">
    <location>
        <begin position="804"/>
        <end position="830"/>
    </location>
</feature>
<feature type="disulfide bond" evidence="2">
    <location>
        <begin position="857"/>
        <end position="878"/>
    </location>
</feature>
<feature type="splice variant" id="VSP_052167" description="In isoform 2." evidence="11 12 13">
    <original>I</original>
    <variation>IGERRLEQHIPTQAVSN</variation>
    <location>
        <position position="237"/>
    </location>
</feature>
<feature type="sequence variant" id="VAR_085320" description="In SSFSC2; decreased homodimerization; does not affect heterodimerization with SCUBE1 or SCUBE2; does not affect localization to the cell surface; dbSNP:rs1783419625." evidence="9">
    <original>C</original>
    <variation>W</variation>
    <location>
        <position position="97"/>
    </location>
</feature>
<feature type="sequence variant" id="VAR_085321" description="In SSFSC2; uncertain significance; dbSNP:rs1783620400." evidence="9">
    <original>G</original>
    <variation>D</variation>
    <location>
        <position position="204"/>
    </location>
</feature>
<feature type="sequence variant" id="VAR_048994" description="In dbSNP:rs3800381.">
    <original>S</original>
    <variation>L</variation>
    <location>
        <position position="410"/>
    </location>
</feature>
<feature type="sequence variant" id="VAR_085322" description="In SSFSC2; loss of stimulation of BMP signaling; does not localize to the cell surface due to impaired secretion." evidence="9">
    <location>
        <begin position="573"/>
        <end position="993"/>
    </location>
</feature>
<feature type="sequence variant" id="VAR_085323" description="In SSFSC2; loss of stimulation of BMP signaling; does not affect localization to the cell surface; dbSNP:rs751478115." evidence="9">
    <original>I</original>
    <variation>T</variation>
    <location>
        <position position="815"/>
    </location>
</feature>
<feature type="sequence variant" id="VAR_085324" description="In SSFSC2." evidence="9">
    <location>
        <begin position="929"/>
        <end position="993"/>
    </location>
</feature>
<feature type="sequence conflict" description="In Ref. 6; AAH52263." evidence="14" ref="6">
    <location>
        <position position="157"/>
    </location>
</feature>
<feature type="sequence conflict" description="In Ref. 6; AAH52263." evidence="14" ref="6">
    <original>T</original>
    <variation>I</variation>
    <location>
        <position position="256"/>
    </location>
</feature>
<feature type="sequence conflict" description="In Ref. 3; BAC03798." evidence="14" ref="3">
    <original>AS</original>
    <variation>SP</variation>
    <location>
        <begin position="483"/>
        <end position="484"/>
    </location>
</feature>
<feature type="sequence conflict" description="In Ref. 7; CAI56752." evidence="14" ref="7">
    <original>K</original>
    <variation>E</variation>
    <location>
        <position position="635"/>
    </location>
</feature>
<feature type="sequence conflict" description="In Ref. 7; CAI56752." evidence="14" ref="7">
    <original>E</original>
    <variation>G</variation>
    <location>
        <position position="856"/>
    </location>
</feature>
<proteinExistence type="evidence at protein level"/>
<reference evidence="14 17" key="1">
    <citation type="journal article" date="2004" name="J. Biol. Chem.">
        <title>A novel secreted, cell-surface glycoprotein containing multiple epidermal growth factor-like repeats and one CUB domain is highly expressed in primary osteoblasts and bones.</title>
        <authorList>
            <person name="Wu B.-T."/>
            <person name="Su Y.-H."/>
            <person name="Tsai M.-T."/>
            <person name="Wasserman S.M."/>
            <person name="Topper J.N."/>
            <person name="Yang R.-B."/>
        </authorList>
    </citation>
    <scope>NUCLEOTIDE SEQUENCE [MRNA] (ISOFORM 1)</scope>
    <scope>SUBUNIT</scope>
    <scope>SUBCELLULAR LOCATION</scope>
    <scope>TISSUE SPECIFICITY</scope>
    <scope>GLYCOSYLATION</scope>
    <source>
        <tissue evidence="6">Osteoblast</tissue>
    </source>
</reference>
<reference evidence="14 16" key="2">
    <citation type="submission" date="2001-11" db="EMBL/GenBank/DDBJ databases">
        <title>Novel human gene family (CEGF) encoding mosaic proteins with EGF-like, STT2R and a CUB module: cloning and expression analysis.</title>
        <authorList>
            <person name="Pfarr N."/>
            <person name="Bahr A."/>
            <person name="Cichutek A."/>
            <person name="Loebbert R."/>
            <person name="Zabel B.U."/>
            <person name="Schmidt E.R."/>
            <person name="Hankeln T."/>
            <person name="Winterpacht A."/>
        </authorList>
    </citation>
    <scope>NUCLEOTIDE SEQUENCE [MRNA] (ISOFORM 1)</scope>
</reference>
<reference evidence="14 18" key="3">
    <citation type="journal article" date="2004" name="Nat. Genet.">
        <title>Complete sequencing and characterization of 21,243 full-length human cDNAs.</title>
        <authorList>
            <person name="Ota T."/>
            <person name="Suzuki Y."/>
            <person name="Nishikawa T."/>
            <person name="Otsuki T."/>
            <person name="Sugiyama T."/>
            <person name="Irie R."/>
            <person name="Wakamatsu A."/>
            <person name="Hayashi K."/>
            <person name="Sato H."/>
            <person name="Nagai K."/>
            <person name="Kimura K."/>
            <person name="Makita H."/>
            <person name="Sekine M."/>
            <person name="Obayashi M."/>
            <person name="Nishi T."/>
            <person name="Shibahara T."/>
            <person name="Tanaka T."/>
            <person name="Ishii S."/>
            <person name="Yamamoto J."/>
            <person name="Saito K."/>
            <person name="Kawai Y."/>
            <person name="Isono Y."/>
            <person name="Nakamura Y."/>
            <person name="Nagahari K."/>
            <person name="Murakami K."/>
            <person name="Yasuda T."/>
            <person name="Iwayanagi T."/>
            <person name="Wagatsuma M."/>
            <person name="Shiratori A."/>
            <person name="Sudo H."/>
            <person name="Hosoiri T."/>
            <person name="Kaku Y."/>
            <person name="Kodaira H."/>
            <person name="Kondo H."/>
            <person name="Sugawara M."/>
            <person name="Takahashi M."/>
            <person name="Kanda K."/>
            <person name="Yokoi T."/>
            <person name="Furuya T."/>
            <person name="Kikkawa E."/>
            <person name="Omura Y."/>
            <person name="Abe K."/>
            <person name="Kamihara K."/>
            <person name="Katsuta N."/>
            <person name="Sato K."/>
            <person name="Tanikawa M."/>
            <person name="Yamazaki M."/>
            <person name="Ninomiya K."/>
            <person name="Ishibashi T."/>
            <person name="Yamashita H."/>
            <person name="Murakawa K."/>
            <person name="Fujimori K."/>
            <person name="Tanai H."/>
            <person name="Kimata M."/>
            <person name="Watanabe M."/>
            <person name="Hiraoka S."/>
            <person name="Chiba Y."/>
            <person name="Ishida S."/>
            <person name="Ono Y."/>
            <person name="Takiguchi S."/>
            <person name="Watanabe S."/>
            <person name="Yosida M."/>
            <person name="Hotuta T."/>
            <person name="Kusano J."/>
            <person name="Kanehori K."/>
            <person name="Takahashi-Fujii A."/>
            <person name="Hara H."/>
            <person name="Tanase T.-O."/>
            <person name="Nomura Y."/>
            <person name="Togiya S."/>
            <person name="Komai F."/>
            <person name="Hara R."/>
            <person name="Takeuchi K."/>
            <person name="Arita M."/>
            <person name="Imose N."/>
            <person name="Musashino K."/>
            <person name="Yuuki H."/>
            <person name="Oshima A."/>
            <person name="Sasaki N."/>
            <person name="Aotsuka S."/>
            <person name="Yoshikawa Y."/>
            <person name="Matsunawa H."/>
            <person name="Ichihara T."/>
            <person name="Shiohata N."/>
            <person name="Sano S."/>
            <person name="Moriya S."/>
            <person name="Momiyama H."/>
            <person name="Satoh N."/>
            <person name="Takami S."/>
            <person name="Terashima Y."/>
            <person name="Suzuki O."/>
            <person name="Nakagawa S."/>
            <person name="Senoh A."/>
            <person name="Mizoguchi H."/>
            <person name="Goto Y."/>
            <person name="Shimizu F."/>
            <person name="Wakebe H."/>
            <person name="Hishigaki H."/>
            <person name="Watanabe T."/>
            <person name="Sugiyama A."/>
            <person name="Takemoto M."/>
            <person name="Kawakami B."/>
            <person name="Yamazaki M."/>
            <person name="Watanabe K."/>
            <person name="Kumagai A."/>
            <person name="Itakura S."/>
            <person name="Fukuzumi Y."/>
            <person name="Fujimori Y."/>
            <person name="Komiyama M."/>
            <person name="Tashiro H."/>
            <person name="Tanigami A."/>
            <person name="Fujiwara T."/>
            <person name="Ono T."/>
            <person name="Yamada K."/>
            <person name="Fujii Y."/>
            <person name="Ozaki K."/>
            <person name="Hirao M."/>
            <person name="Ohmori Y."/>
            <person name="Kawabata A."/>
            <person name="Hikiji T."/>
            <person name="Kobatake N."/>
            <person name="Inagaki H."/>
            <person name="Ikema Y."/>
            <person name="Okamoto S."/>
            <person name="Okitani R."/>
            <person name="Kawakami T."/>
            <person name="Noguchi S."/>
            <person name="Itoh T."/>
            <person name="Shigeta K."/>
            <person name="Senba T."/>
            <person name="Matsumura K."/>
            <person name="Nakajima Y."/>
            <person name="Mizuno T."/>
            <person name="Morinaga M."/>
            <person name="Sasaki M."/>
            <person name="Togashi T."/>
            <person name="Oyama M."/>
            <person name="Hata H."/>
            <person name="Watanabe M."/>
            <person name="Komatsu T."/>
            <person name="Mizushima-Sugano J."/>
            <person name="Satoh T."/>
            <person name="Shirai Y."/>
            <person name="Takahashi Y."/>
            <person name="Nakagawa K."/>
            <person name="Okumura K."/>
            <person name="Nagase T."/>
            <person name="Nomura N."/>
            <person name="Kikuchi H."/>
            <person name="Masuho Y."/>
            <person name="Yamashita R."/>
            <person name="Nakai K."/>
            <person name="Yada T."/>
            <person name="Nakamura Y."/>
            <person name="Ohara O."/>
            <person name="Isogai T."/>
            <person name="Sugano S."/>
        </authorList>
    </citation>
    <scope>NUCLEOTIDE SEQUENCE [LARGE SCALE MRNA] (ISOFORM 1)</scope>
    <scope>NUCLEOTIDE SEQUENCE [LARGE SCALE MRNA] OF 45-993 (ISOFORM 2)</scope>
</reference>
<reference evidence="14 19" key="4">
    <citation type="journal article" date="2003" name="Nature">
        <title>The DNA sequence and analysis of human chromosome 6.</title>
        <authorList>
            <person name="Mungall A.J."/>
            <person name="Palmer S.A."/>
            <person name="Sims S.K."/>
            <person name="Edwards C.A."/>
            <person name="Ashurst J.L."/>
            <person name="Wilming L."/>
            <person name="Jones M.C."/>
            <person name="Horton R."/>
            <person name="Hunt S.E."/>
            <person name="Scott C.E."/>
            <person name="Gilbert J.G.R."/>
            <person name="Clamp M.E."/>
            <person name="Bethel G."/>
            <person name="Milne S."/>
            <person name="Ainscough R."/>
            <person name="Almeida J.P."/>
            <person name="Ambrose K.D."/>
            <person name="Andrews T.D."/>
            <person name="Ashwell R.I.S."/>
            <person name="Babbage A.K."/>
            <person name="Bagguley C.L."/>
            <person name="Bailey J."/>
            <person name="Banerjee R."/>
            <person name="Barker D.J."/>
            <person name="Barlow K.F."/>
            <person name="Bates K."/>
            <person name="Beare D.M."/>
            <person name="Beasley H."/>
            <person name="Beasley O."/>
            <person name="Bird C.P."/>
            <person name="Blakey S.E."/>
            <person name="Bray-Allen S."/>
            <person name="Brook J."/>
            <person name="Brown A.J."/>
            <person name="Brown J.Y."/>
            <person name="Burford D.C."/>
            <person name="Burrill W."/>
            <person name="Burton J."/>
            <person name="Carder C."/>
            <person name="Carter N.P."/>
            <person name="Chapman J.C."/>
            <person name="Clark S.Y."/>
            <person name="Clark G."/>
            <person name="Clee C.M."/>
            <person name="Clegg S."/>
            <person name="Cobley V."/>
            <person name="Collier R.E."/>
            <person name="Collins J.E."/>
            <person name="Colman L.K."/>
            <person name="Corby N.R."/>
            <person name="Coville G.J."/>
            <person name="Culley K.M."/>
            <person name="Dhami P."/>
            <person name="Davies J."/>
            <person name="Dunn M."/>
            <person name="Earthrowl M.E."/>
            <person name="Ellington A.E."/>
            <person name="Evans K.A."/>
            <person name="Faulkner L."/>
            <person name="Francis M.D."/>
            <person name="Frankish A."/>
            <person name="Frankland J."/>
            <person name="French L."/>
            <person name="Garner P."/>
            <person name="Garnett J."/>
            <person name="Ghori M.J."/>
            <person name="Gilby L.M."/>
            <person name="Gillson C.J."/>
            <person name="Glithero R.J."/>
            <person name="Grafham D.V."/>
            <person name="Grant M."/>
            <person name="Gribble S."/>
            <person name="Griffiths C."/>
            <person name="Griffiths M.N.D."/>
            <person name="Hall R."/>
            <person name="Halls K.S."/>
            <person name="Hammond S."/>
            <person name="Harley J.L."/>
            <person name="Hart E.A."/>
            <person name="Heath P.D."/>
            <person name="Heathcott R."/>
            <person name="Holmes S.J."/>
            <person name="Howden P.J."/>
            <person name="Howe K.L."/>
            <person name="Howell G.R."/>
            <person name="Huckle E."/>
            <person name="Humphray S.J."/>
            <person name="Humphries M.D."/>
            <person name="Hunt A.R."/>
            <person name="Johnson C.M."/>
            <person name="Joy A.A."/>
            <person name="Kay M."/>
            <person name="Keenan S.J."/>
            <person name="Kimberley A.M."/>
            <person name="King A."/>
            <person name="Laird G.K."/>
            <person name="Langford C."/>
            <person name="Lawlor S."/>
            <person name="Leongamornlert D.A."/>
            <person name="Leversha M."/>
            <person name="Lloyd C.R."/>
            <person name="Lloyd D.M."/>
            <person name="Loveland J.E."/>
            <person name="Lovell J."/>
            <person name="Martin S."/>
            <person name="Mashreghi-Mohammadi M."/>
            <person name="Maslen G.L."/>
            <person name="Matthews L."/>
            <person name="McCann O.T."/>
            <person name="McLaren S.J."/>
            <person name="McLay K."/>
            <person name="McMurray A."/>
            <person name="Moore M.J.F."/>
            <person name="Mullikin J.C."/>
            <person name="Niblett D."/>
            <person name="Nickerson T."/>
            <person name="Novik K.L."/>
            <person name="Oliver K."/>
            <person name="Overton-Larty E.K."/>
            <person name="Parker A."/>
            <person name="Patel R."/>
            <person name="Pearce A.V."/>
            <person name="Peck A.I."/>
            <person name="Phillimore B.J.C.T."/>
            <person name="Phillips S."/>
            <person name="Plumb R.W."/>
            <person name="Porter K.M."/>
            <person name="Ramsey Y."/>
            <person name="Ranby S.A."/>
            <person name="Rice C.M."/>
            <person name="Ross M.T."/>
            <person name="Searle S.M."/>
            <person name="Sehra H.K."/>
            <person name="Sheridan E."/>
            <person name="Skuce C.D."/>
            <person name="Smith S."/>
            <person name="Smith M."/>
            <person name="Spraggon L."/>
            <person name="Squares S.L."/>
            <person name="Steward C.A."/>
            <person name="Sycamore N."/>
            <person name="Tamlyn-Hall G."/>
            <person name="Tester J."/>
            <person name="Theaker A.J."/>
            <person name="Thomas D.W."/>
            <person name="Thorpe A."/>
            <person name="Tracey A."/>
            <person name="Tromans A."/>
            <person name="Tubby B."/>
            <person name="Wall M."/>
            <person name="Wallis J.M."/>
            <person name="West A.P."/>
            <person name="White S.S."/>
            <person name="Whitehead S.L."/>
            <person name="Whittaker H."/>
            <person name="Wild A."/>
            <person name="Willey D.J."/>
            <person name="Wilmer T.E."/>
            <person name="Wood J.M."/>
            <person name="Wray P.W."/>
            <person name="Wyatt J.C."/>
            <person name="Young L."/>
            <person name="Younger R.M."/>
            <person name="Bentley D.R."/>
            <person name="Coulson A."/>
            <person name="Durbin R.M."/>
            <person name="Hubbard T."/>
            <person name="Sulston J.E."/>
            <person name="Dunham I."/>
            <person name="Rogers J."/>
            <person name="Beck S."/>
        </authorList>
    </citation>
    <scope>NUCLEOTIDE SEQUENCE [LARGE SCALE GENOMIC DNA]</scope>
</reference>
<reference evidence="14 16" key="5">
    <citation type="submission" date="2005-07" db="EMBL/GenBank/DDBJ databases">
        <authorList>
            <person name="Mural R.J."/>
            <person name="Istrail S."/>
            <person name="Sutton G.G."/>
            <person name="Florea L."/>
            <person name="Halpern A.L."/>
            <person name="Mobarry C.M."/>
            <person name="Lippert R."/>
            <person name="Walenz B."/>
            <person name="Shatkay H."/>
            <person name="Dew I."/>
            <person name="Miller J.R."/>
            <person name="Flanigan M.J."/>
            <person name="Edwards N.J."/>
            <person name="Bolanos R."/>
            <person name="Fasulo D."/>
            <person name="Halldorsson B.V."/>
            <person name="Hannenhalli S."/>
            <person name="Turner R."/>
            <person name="Yooseph S."/>
            <person name="Lu F."/>
            <person name="Nusskern D.R."/>
            <person name="Shue B.C."/>
            <person name="Zheng X.H."/>
            <person name="Zhong F."/>
            <person name="Delcher A.L."/>
            <person name="Huson D.H."/>
            <person name="Kravitz S.A."/>
            <person name="Mouchard L."/>
            <person name="Reinert K."/>
            <person name="Remington K.A."/>
            <person name="Clark A.G."/>
            <person name="Waterman M.S."/>
            <person name="Eichler E.E."/>
            <person name="Adams M.D."/>
            <person name="Hunkapiller M.W."/>
            <person name="Myers E.W."/>
            <person name="Venter J.C."/>
        </authorList>
    </citation>
    <scope>NUCLEOTIDE SEQUENCE [LARGE SCALE GENOMIC DNA]</scope>
</reference>
<reference evidence="14 15" key="6">
    <citation type="journal article" date="2004" name="Genome Res.">
        <title>The status, quality, and expansion of the NIH full-length cDNA project: the Mammalian Gene Collection (MGC).</title>
        <authorList>
            <consortium name="The MGC Project Team"/>
        </authorList>
    </citation>
    <scope>NUCLEOTIDE SEQUENCE [LARGE SCALE MRNA] (ISOFORM 1)</scope>
    <source>
        <tissue evidence="15">Pancreas</tissue>
    </source>
</reference>
<reference key="7">
    <citation type="journal article" date="2007" name="BMC Genomics">
        <title>The full-ORF clone resource of the German cDNA consortium.</title>
        <authorList>
            <person name="Bechtel S."/>
            <person name="Rosenfelder H."/>
            <person name="Duda A."/>
            <person name="Schmidt C.P."/>
            <person name="Ernst U."/>
            <person name="Wellenreuther R."/>
            <person name="Mehrle A."/>
            <person name="Schuster C."/>
            <person name="Bahr A."/>
            <person name="Bloecker H."/>
            <person name="Heubner D."/>
            <person name="Hoerlein A."/>
            <person name="Michel G."/>
            <person name="Wedler H."/>
            <person name="Koehrer K."/>
            <person name="Ottenwaelder B."/>
            <person name="Poustka A."/>
            <person name="Wiemann S."/>
            <person name="Schupp I."/>
        </authorList>
    </citation>
    <scope>NUCLEOTIDE SEQUENCE [LARGE SCALE MRNA] OF 158-993 (ISOFORM 2)</scope>
    <source>
        <tissue>Testis</tissue>
    </source>
</reference>
<reference key="8">
    <citation type="journal article" date="2011" name="Oncogene">
        <title>SCUBE3 is an endogenous TGF-beta receptor ligand and regulates the epithelial-mesenchymal transition in lung cancer.</title>
        <authorList>
            <person name="Wu Y.Y."/>
            <person name="Peck K."/>
            <person name="Chang Y.L."/>
            <person name="Pan S.H."/>
            <person name="Cheng Y.F."/>
            <person name="Lin J.C."/>
            <person name="Yang R.B."/>
            <person name="Hong T.M."/>
            <person name="Yang P.C."/>
        </authorList>
    </citation>
    <scope>FUNCTION</scope>
    <scope>INTERACTION WITH TGFBR2</scope>
    <scope>TISSUE SPECIFICITY</scope>
    <scope>PROTEOLYTIC CLEAVAGE BY MMP2 AND MMP9</scope>
</reference>
<reference key="9">
    <citation type="journal article" date="2021" name="Am. J. Hum. Genet.">
        <title>SCUBE3 loss-of-function causes a recognizable recessive developmental disorder due to defective bone morphogenetic protein signaling.</title>
        <authorList>
            <consortium name="Genomics England Research Consortium"/>
            <person name="Lin Y.C."/>
            <person name="Niceta M."/>
            <person name="Muto V."/>
            <person name="Vona B."/>
            <person name="Pagnamenta A.T."/>
            <person name="Maroofian R."/>
            <person name="Beetz C."/>
            <person name="van Duyvenvoorde H."/>
            <person name="Dentici M.L."/>
            <person name="Lauffer P."/>
            <person name="Vallian S."/>
            <person name="Ciolfi A."/>
            <person name="Pizzi S."/>
            <person name="Bauer P."/>
            <person name="Gruening N.M."/>
            <person name="Bellacchio E."/>
            <person name="Del Fattore A."/>
            <person name="Petrini S."/>
            <person name="Shaheen R."/>
            <person name="Tiosano D."/>
            <person name="Halloun R."/>
            <person name="Pode-Shakked B."/>
            <person name="Albayrak H.M."/>
            <person name="Isik E."/>
            <person name="Wit J.M."/>
            <person name="Dittrich M."/>
            <person name="Freire B.L."/>
            <person name="Bertola D.R."/>
            <person name="Jorge A.A.L."/>
            <person name="Barel O."/>
            <person name="Sabir A.H."/>
            <person name="Al Tenaiji A.M.J."/>
            <person name="Taji S.M."/>
            <person name="Al-Sannaa N."/>
            <person name="Al-Abdulwahed H."/>
            <person name="Digilio M.C."/>
            <person name="Irving M."/>
            <person name="Anikster Y."/>
            <person name="Bhavani G.S.L."/>
            <person name="Girisha K.M."/>
            <person name="Haaf T."/>
            <person name="Taylor J.C."/>
            <person name="Dallapiccola B."/>
            <person name="Alkuraya F.S."/>
            <person name="Yang R.B."/>
            <person name="Tartaglia M."/>
        </authorList>
    </citation>
    <scope>FUNCTION</scope>
    <scope>SUBCELLULAR LOCATION</scope>
    <scope>INTERACTION WITH SCUBE1 AND SCUBE2</scope>
    <scope>INTERACTION WITH BMP2; BMP4; BMP7; BMPR1A; BMPR1B AND BMPR2</scope>
    <scope>INVOLVEMENT IN SSFSC2</scope>
    <scope>VARIANTS SSFSC2 TRP-97; ASP-204; 573-ARG--LYS-993 DEL; THR-815 AND 929-ARG--LYS-993 DEL</scope>
    <scope>CHARACTERIZATION OF VARIANTS SSFSC2 TRP-97; 573-ARG--LYS-993 DEL AND THR-815</scope>
</reference>
<evidence type="ECO:0000250" key="1">
    <source>
        <dbReference type="UniProtKB" id="Q6NZL8"/>
    </source>
</evidence>
<evidence type="ECO:0000255" key="2"/>
<evidence type="ECO:0000255" key="3">
    <source>
        <dbReference type="PROSITE-ProRule" id="PRU00059"/>
    </source>
</evidence>
<evidence type="ECO:0000255" key="4">
    <source>
        <dbReference type="PROSITE-ProRule" id="PRU00076"/>
    </source>
</evidence>
<evidence type="ECO:0000269" key="5">
    <source>
    </source>
</evidence>
<evidence type="ECO:0000269" key="6">
    <source>
    </source>
</evidence>
<evidence type="ECO:0000269" key="7">
    <source>
    </source>
</evidence>
<evidence type="ECO:0000269" key="8">
    <source>
    </source>
</evidence>
<evidence type="ECO:0000269" key="9">
    <source>
    </source>
</evidence>
<evidence type="ECO:0000269" key="10">
    <source ref="2"/>
</evidence>
<evidence type="ECO:0000303" key="11">
    <source>
    </source>
</evidence>
<evidence type="ECO:0000303" key="12">
    <source>
    </source>
</evidence>
<evidence type="ECO:0000303" key="13">
    <source>
    </source>
</evidence>
<evidence type="ECO:0000305" key="14"/>
<evidence type="ECO:0000312" key="15">
    <source>
        <dbReference type="EMBL" id="AAH52263.2"/>
    </source>
</evidence>
<evidence type="ECO:0000312" key="16">
    <source>
        <dbReference type="EMBL" id="AAN76808.1"/>
    </source>
</evidence>
<evidence type="ECO:0000312" key="17">
    <source>
        <dbReference type="EMBL" id="AAU08347.1"/>
    </source>
</evidence>
<evidence type="ECO:0000312" key="18">
    <source>
        <dbReference type="EMBL" id="BAC03798.1"/>
    </source>
</evidence>
<evidence type="ECO:0000312" key="19">
    <source>
        <dbReference type="EMBL" id="Z97832"/>
    </source>
</evidence>
<evidence type="ECO:0000312" key="20">
    <source>
        <dbReference type="HGNC" id="HGNC:13655"/>
    </source>
</evidence>
<dbReference type="EMBL" id="AY639608">
    <property type="protein sequence ID" value="AAU08347.1"/>
    <property type="molecule type" value="mRNA"/>
</dbReference>
<dbReference type="EMBL" id="AF452494">
    <property type="protein sequence ID" value="AAN76808.1"/>
    <property type="molecule type" value="mRNA"/>
</dbReference>
<dbReference type="EMBL" id="AK092062">
    <property type="protein sequence ID" value="BAC03798.1"/>
    <property type="status" value="ALT_INIT"/>
    <property type="molecule type" value="mRNA"/>
</dbReference>
<dbReference type="EMBL" id="AK291218">
    <property type="protein sequence ID" value="BAF83907.1"/>
    <property type="molecule type" value="mRNA"/>
</dbReference>
<dbReference type="EMBL" id="Z97832">
    <property type="status" value="NOT_ANNOTATED_CDS"/>
    <property type="molecule type" value="Genomic_DNA"/>
</dbReference>
<dbReference type="EMBL" id="CH471081">
    <property type="protein sequence ID" value="EAX03812.1"/>
    <property type="molecule type" value="Genomic_DNA"/>
</dbReference>
<dbReference type="EMBL" id="BC052263">
    <property type="protein sequence ID" value="AAH52263.2"/>
    <property type="molecule type" value="mRNA"/>
</dbReference>
<dbReference type="EMBL" id="CR936607">
    <property type="protein sequence ID" value="CAI56752.1"/>
    <property type="molecule type" value="mRNA"/>
</dbReference>
<dbReference type="CCDS" id="CCDS4800.1">
    <molecule id="Q8IX30-1"/>
</dbReference>
<dbReference type="RefSeq" id="NP_001290065.1">
    <property type="nucleotide sequence ID" value="NM_001303136.1"/>
</dbReference>
<dbReference type="RefSeq" id="NP_689966.2">
    <molecule id="Q8IX30-1"/>
    <property type="nucleotide sequence ID" value="NM_152753.3"/>
</dbReference>
<dbReference type="RefSeq" id="XP_005249000.1">
    <molecule id="Q8IX30-2"/>
    <property type="nucleotide sequence ID" value="XM_005248943.2"/>
</dbReference>
<dbReference type="RefSeq" id="XP_054210638.1">
    <molecule id="Q8IX30-2"/>
    <property type="nucleotide sequence ID" value="XM_054354663.1"/>
</dbReference>
<dbReference type="BioGRID" id="128812">
    <property type="interactions" value="3"/>
</dbReference>
<dbReference type="FunCoup" id="Q8IX30">
    <property type="interactions" value="93"/>
</dbReference>
<dbReference type="IntAct" id="Q8IX30">
    <property type="interactions" value="3"/>
</dbReference>
<dbReference type="STRING" id="9606.ENSP00000274938"/>
<dbReference type="GlyCosmos" id="Q8IX30">
    <property type="glycosylation" value="5 sites, No reported glycans"/>
</dbReference>
<dbReference type="GlyGen" id="Q8IX30">
    <property type="glycosylation" value="5 sites, 1 N-linked glycan (2 sites)"/>
</dbReference>
<dbReference type="iPTMnet" id="Q8IX30"/>
<dbReference type="PhosphoSitePlus" id="Q8IX30"/>
<dbReference type="BioMuta" id="SCUBE3"/>
<dbReference type="DMDM" id="74762488"/>
<dbReference type="jPOST" id="Q8IX30"/>
<dbReference type="MassIVE" id="Q8IX30"/>
<dbReference type="PaxDb" id="9606-ENSP00000274938"/>
<dbReference type="PeptideAtlas" id="Q8IX30"/>
<dbReference type="ProteomicsDB" id="70970">
    <molecule id="Q8IX30-1"/>
</dbReference>
<dbReference type="ProteomicsDB" id="70971">
    <molecule id="Q8IX30-2"/>
</dbReference>
<dbReference type="Antibodypedia" id="29465">
    <property type="antibodies" value="175 antibodies from 26 providers"/>
</dbReference>
<dbReference type="DNASU" id="222663"/>
<dbReference type="Ensembl" id="ENST00000274938.8">
    <molecule id="Q8IX30-1"/>
    <property type="protein sequence ID" value="ENSP00000274938.7"/>
    <property type="gene ID" value="ENSG00000146197.9"/>
</dbReference>
<dbReference type="GeneID" id="222663"/>
<dbReference type="KEGG" id="hsa:222663"/>
<dbReference type="MANE-Select" id="ENST00000274938.8">
    <property type="protein sequence ID" value="ENSP00000274938.7"/>
    <property type="RefSeq nucleotide sequence ID" value="NM_152753.4"/>
    <property type="RefSeq protein sequence ID" value="NP_689966.2"/>
</dbReference>
<dbReference type="UCSC" id="uc003okf.2">
    <molecule id="Q8IX30-1"/>
    <property type="organism name" value="human"/>
</dbReference>
<dbReference type="AGR" id="HGNC:13655"/>
<dbReference type="CTD" id="222663"/>
<dbReference type="DisGeNET" id="222663"/>
<dbReference type="GeneCards" id="SCUBE3"/>
<dbReference type="HGNC" id="HGNC:13655">
    <property type="gene designation" value="SCUBE3"/>
</dbReference>
<dbReference type="HPA" id="ENSG00000146197">
    <property type="expression patterns" value="Tissue enriched (thyroid)"/>
</dbReference>
<dbReference type="MalaCards" id="SCUBE3"/>
<dbReference type="MIM" id="614708">
    <property type="type" value="gene"/>
</dbReference>
<dbReference type="MIM" id="619184">
    <property type="type" value="phenotype"/>
</dbReference>
<dbReference type="neXtProt" id="NX_Q8IX30"/>
<dbReference type="OpenTargets" id="ENSG00000146197"/>
<dbReference type="PharmGKB" id="PA134977856"/>
<dbReference type="VEuPathDB" id="HostDB:ENSG00000146197"/>
<dbReference type="eggNOG" id="KOG1217">
    <property type="taxonomic scope" value="Eukaryota"/>
</dbReference>
<dbReference type="GeneTree" id="ENSGT00940000153185"/>
<dbReference type="HOGENOM" id="CLU_013079_0_0_1"/>
<dbReference type="InParanoid" id="Q8IX30"/>
<dbReference type="OMA" id="VETTDNC"/>
<dbReference type="OrthoDB" id="4062651at2759"/>
<dbReference type="PAN-GO" id="Q8IX30">
    <property type="GO annotations" value="3 GO annotations based on evolutionary models"/>
</dbReference>
<dbReference type="PhylomeDB" id="Q8IX30"/>
<dbReference type="TreeFam" id="TF351672"/>
<dbReference type="PathwayCommons" id="Q8IX30"/>
<dbReference type="Reactome" id="R-HSA-1474228">
    <property type="pathway name" value="Degradation of the extracellular matrix"/>
</dbReference>
<dbReference type="SignaLink" id="Q8IX30"/>
<dbReference type="BioGRID-ORCS" id="222663">
    <property type="hits" value="11 hits in 1075 CRISPR screens"/>
</dbReference>
<dbReference type="ChiTaRS" id="SCUBE3">
    <property type="organism name" value="human"/>
</dbReference>
<dbReference type="GenomeRNAi" id="222663"/>
<dbReference type="Pharos" id="Q8IX30">
    <property type="development level" value="Tbio"/>
</dbReference>
<dbReference type="PRO" id="PR:Q8IX30"/>
<dbReference type="Proteomes" id="UP000005640">
    <property type="component" value="Chromosome 6"/>
</dbReference>
<dbReference type="RNAct" id="Q8IX30">
    <property type="molecule type" value="protein"/>
</dbReference>
<dbReference type="Bgee" id="ENSG00000146197">
    <property type="expression patterns" value="Expressed in cartilage tissue and 142 other cell types or tissues"/>
</dbReference>
<dbReference type="GO" id="GO:0009986">
    <property type="term" value="C:cell surface"/>
    <property type="evidence" value="ECO:0000314"/>
    <property type="project" value="UniProtKB"/>
</dbReference>
<dbReference type="GO" id="GO:0005615">
    <property type="term" value="C:extracellular space"/>
    <property type="evidence" value="ECO:0000318"/>
    <property type="project" value="GO_Central"/>
</dbReference>
<dbReference type="GO" id="GO:0005886">
    <property type="term" value="C:plasma membrane"/>
    <property type="evidence" value="ECO:0000314"/>
    <property type="project" value="HPA"/>
</dbReference>
<dbReference type="GO" id="GO:0036122">
    <property type="term" value="F:BMP binding"/>
    <property type="evidence" value="ECO:0000353"/>
    <property type="project" value="UniProtKB"/>
</dbReference>
<dbReference type="GO" id="GO:0070700">
    <property type="term" value="F:BMP receptor binding"/>
    <property type="evidence" value="ECO:0000353"/>
    <property type="project" value="UniProtKB"/>
</dbReference>
<dbReference type="GO" id="GO:0005509">
    <property type="term" value="F:calcium ion binding"/>
    <property type="evidence" value="ECO:0007669"/>
    <property type="project" value="InterPro"/>
</dbReference>
<dbReference type="GO" id="GO:0042802">
    <property type="term" value="F:identical protein binding"/>
    <property type="evidence" value="ECO:0000353"/>
    <property type="project" value="UniProtKB"/>
</dbReference>
<dbReference type="GO" id="GO:0030513">
    <property type="term" value="P:positive regulation of BMP signaling pathway"/>
    <property type="evidence" value="ECO:0000315"/>
    <property type="project" value="UniProtKB"/>
</dbReference>
<dbReference type="GO" id="GO:0045669">
    <property type="term" value="P:positive regulation of osteoblast differentiation"/>
    <property type="evidence" value="ECO:0000315"/>
    <property type="project" value="UniProtKB"/>
</dbReference>
<dbReference type="GO" id="GO:0007165">
    <property type="term" value="P:signal transduction"/>
    <property type="evidence" value="ECO:0000318"/>
    <property type="project" value="GO_Central"/>
</dbReference>
<dbReference type="CDD" id="cd00041">
    <property type="entry name" value="CUB"/>
    <property type="match status" value="1"/>
</dbReference>
<dbReference type="CDD" id="cd00054">
    <property type="entry name" value="EGF_CA"/>
    <property type="match status" value="3"/>
</dbReference>
<dbReference type="FunFam" id="2.10.25.10:FF:000032">
    <property type="entry name" value="signal peptide, CUB and EGF-like domain-containing protein 2 isoform X1"/>
    <property type="match status" value="1"/>
</dbReference>
<dbReference type="FunFam" id="2.10.50.10:FF:000002">
    <property type="entry name" value="signal peptide, CUB and EGF-like domain-containing protein 2 isoform X1"/>
    <property type="match status" value="1"/>
</dbReference>
<dbReference type="FunFam" id="2.10.50.10:FF:000006">
    <property type="entry name" value="Signal peptide, CUB domain and EGF like domain containing 3"/>
    <property type="match status" value="1"/>
</dbReference>
<dbReference type="FunFam" id="2.10.25.10:FF:000110">
    <property type="entry name" value="Signal peptide, CUB domain and EGF-like domain-containing 1"/>
    <property type="match status" value="1"/>
</dbReference>
<dbReference type="FunFam" id="2.10.25.10:FF:000028">
    <property type="entry name" value="Signal peptide, CUB domain and EGF-like domain-containing 2"/>
    <property type="match status" value="1"/>
</dbReference>
<dbReference type="FunFam" id="2.10.25.10:FF:000030">
    <property type="entry name" value="Signal peptide, CUB domain and EGF-like domain-containing 2"/>
    <property type="match status" value="1"/>
</dbReference>
<dbReference type="FunFam" id="2.10.25.10:FF:000035">
    <property type="entry name" value="Signal peptide, CUB domain and EGF-like domain-containing 2"/>
    <property type="match status" value="1"/>
</dbReference>
<dbReference type="FunFam" id="2.10.25.10:FF:000037">
    <property type="entry name" value="Signal peptide, CUB domain and EGF-like domain-containing 2"/>
    <property type="match status" value="1"/>
</dbReference>
<dbReference type="FunFam" id="2.60.120.290:FF:000002">
    <property type="entry name" value="Signal peptide, CUB domain and EGF-like domain-containing 2"/>
    <property type="match status" value="1"/>
</dbReference>
<dbReference type="FunFam" id="2.10.25.10:FF:000124">
    <property type="entry name" value="Signal peptide, CUB domain and EGF-like domain-containing 3"/>
    <property type="match status" value="1"/>
</dbReference>
<dbReference type="FunFam" id="2.10.25.10:FF:000161">
    <property type="entry name" value="Signal peptide, CUB domain and EGF-like domain-containing 3"/>
    <property type="match status" value="1"/>
</dbReference>
<dbReference type="FunFam" id="2.10.50.10:FF:000008">
    <property type="entry name" value="Signal peptide, CUB domain and EGF-like domain-containing 3"/>
    <property type="match status" value="1"/>
</dbReference>
<dbReference type="FunFam" id="2.10.25.10:FF:000008">
    <property type="entry name" value="Signal peptide, CUB domain, EGF-like 2"/>
    <property type="match status" value="1"/>
</dbReference>
<dbReference type="Gene3D" id="2.10.25.10">
    <property type="entry name" value="Laminin"/>
    <property type="match status" value="9"/>
</dbReference>
<dbReference type="Gene3D" id="2.60.120.290">
    <property type="entry name" value="Spermadhesin, CUB domain"/>
    <property type="match status" value="1"/>
</dbReference>
<dbReference type="Gene3D" id="2.10.50.10">
    <property type="entry name" value="Tumor Necrosis Factor Receptor, subunit A, domain 2"/>
    <property type="match status" value="3"/>
</dbReference>
<dbReference type="InterPro" id="IPR026823">
    <property type="entry name" value="cEGF"/>
</dbReference>
<dbReference type="InterPro" id="IPR000859">
    <property type="entry name" value="CUB_dom"/>
</dbReference>
<dbReference type="InterPro" id="IPR001881">
    <property type="entry name" value="EGF-like_Ca-bd_dom"/>
</dbReference>
<dbReference type="InterPro" id="IPR000742">
    <property type="entry name" value="EGF-like_dom"/>
</dbReference>
<dbReference type="InterPro" id="IPR000152">
    <property type="entry name" value="EGF-type_Asp/Asn_hydroxyl_site"/>
</dbReference>
<dbReference type="InterPro" id="IPR018097">
    <property type="entry name" value="EGF_Ca-bd_CS"/>
</dbReference>
<dbReference type="InterPro" id="IPR024731">
    <property type="entry name" value="EGF_dom"/>
</dbReference>
<dbReference type="InterPro" id="IPR009030">
    <property type="entry name" value="Growth_fac_rcpt_cys_sf"/>
</dbReference>
<dbReference type="InterPro" id="IPR049883">
    <property type="entry name" value="NOTCH1_EGF-like"/>
</dbReference>
<dbReference type="InterPro" id="IPR052071">
    <property type="entry name" value="SCUB_EGF-like_domain"/>
</dbReference>
<dbReference type="InterPro" id="IPR035914">
    <property type="entry name" value="Sperma_CUB_dom_sf"/>
</dbReference>
<dbReference type="InterPro" id="IPR011641">
    <property type="entry name" value="Tyr-kin_ephrin_A/B_rcpt-like"/>
</dbReference>
<dbReference type="PANTHER" id="PTHR24046">
    <property type="entry name" value="SIGNAL PEPTIDE, CUB AND EGF-LIKE DOMAIN-CONTAINING"/>
    <property type="match status" value="1"/>
</dbReference>
<dbReference type="PANTHER" id="PTHR24046:SF2">
    <property type="entry name" value="SIGNAL PEPTIDE, CUB AND EGF-LIKE DOMAIN-CONTAINING PROTEIN 3"/>
    <property type="match status" value="1"/>
</dbReference>
<dbReference type="Pfam" id="PF12662">
    <property type="entry name" value="cEGF"/>
    <property type="match status" value="1"/>
</dbReference>
<dbReference type="Pfam" id="PF00431">
    <property type="entry name" value="CUB"/>
    <property type="match status" value="1"/>
</dbReference>
<dbReference type="Pfam" id="PF12947">
    <property type="entry name" value="EGF_3"/>
    <property type="match status" value="1"/>
</dbReference>
<dbReference type="Pfam" id="PF07645">
    <property type="entry name" value="EGF_CA"/>
    <property type="match status" value="2"/>
</dbReference>
<dbReference type="Pfam" id="PF07699">
    <property type="entry name" value="Ephrin_rec_like"/>
    <property type="match status" value="3"/>
</dbReference>
<dbReference type="Pfam" id="PF14670">
    <property type="entry name" value="FXa_inhibition"/>
    <property type="match status" value="3"/>
</dbReference>
<dbReference type="SMART" id="SM00042">
    <property type="entry name" value="CUB"/>
    <property type="match status" value="1"/>
</dbReference>
<dbReference type="SMART" id="SM00181">
    <property type="entry name" value="EGF"/>
    <property type="match status" value="10"/>
</dbReference>
<dbReference type="SMART" id="SM00179">
    <property type="entry name" value="EGF_CA"/>
    <property type="match status" value="7"/>
</dbReference>
<dbReference type="SMART" id="SM01411">
    <property type="entry name" value="Ephrin_rec_like"/>
    <property type="match status" value="4"/>
</dbReference>
<dbReference type="SUPFAM" id="SSF57196">
    <property type="entry name" value="EGF/Laminin"/>
    <property type="match status" value="3"/>
</dbReference>
<dbReference type="SUPFAM" id="SSF57184">
    <property type="entry name" value="Growth factor receptor domain"/>
    <property type="match status" value="3"/>
</dbReference>
<dbReference type="SUPFAM" id="SSF49854">
    <property type="entry name" value="Spermadhesin, CUB domain"/>
    <property type="match status" value="1"/>
</dbReference>
<dbReference type="PROSITE" id="PS00010">
    <property type="entry name" value="ASX_HYDROXYL"/>
    <property type="match status" value="6"/>
</dbReference>
<dbReference type="PROSITE" id="PS01180">
    <property type="entry name" value="CUB"/>
    <property type="match status" value="1"/>
</dbReference>
<dbReference type="PROSITE" id="PS01186">
    <property type="entry name" value="EGF_2"/>
    <property type="match status" value="7"/>
</dbReference>
<dbReference type="PROSITE" id="PS50026">
    <property type="entry name" value="EGF_3"/>
    <property type="match status" value="6"/>
</dbReference>
<dbReference type="PROSITE" id="PS01187">
    <property type="entry name" value="EGF_CA"/>
    <property type="match status" value="6"/>
</dbReference>
<organism>
    <name type="scientific">Homo sapiens</name>
    <name type="common">Human</name>
    <dbReference type="NCBI Taxonomy" id="9606"/>
    <lineage>
        <taxon>Eukaryota</taxon>
        <taxon>Metazoa</taxon>
        <taxon>Chordata</taxon>
        <taxon>Craniata</taxon>
        <taxon>Vertebrata</taxon>
        <taxon>Euteleostomi</taxon>
        <taxon>Mammalia</taxon>
        <taxon>Eutheria</taxon>
        <taxon>Euarchontoglires</taxon>
        <taxon>Primates</taxon>
        <taxon>Haplorrhini</taxon>
        <taxon>Catarrhini</taxon>
        <taxon>Hominidae</taxon>
        <taxon>Homo</taxon>
    </lineage>
</organism>